<proteinExistence type="inferred from homology"/>
<reference key="1">
    <citation type="journal article" date="2004" name="Mol. Cells">
        <title>Nucleotide sequences of a Korean isolate of apple stem grooving virus associated with black necrotic leaf spot disease on pear (Pyrus pyrifolia).</title>
        <authorList>
            <person name="Shim H."/>
            <person name="Min Y."/>
            <person name="Hong S."/>
            <person name="Kwon M."/>
            <person name="Kim D."/>
            <person name="Kim H."/>
            <person name="Choi Y."/>
            <person name="Lee S."/>
            <person name="Yang J."/>
        </authorList>
    </citation>
    <scope>NUCLEOTIDE SEQUENCE [GENOMIC RNA]</scope>
</reference>
<accession>P0C1U3</accession>
<evidence type="ECO:0000250" key="1"/>
<evidence type="ECO:0000255" key="2"/>
<evidence type="ECO:0000256" key="3">
    <source>
        <dbReference type="SAM" id="MobiDB-lite"/>
    </source>
</evidence>
<evidence type="ECO:0000305" key="4"/>
<sequence length="320" mass="36093">MAIVNVNHFLKEVESTDLKIDAIASSELYKDATFFKPDVLNCIKRFESNVKVSQGQGDGLVLSDFKLLDDTEIDSIRKKSNKYKYLHYGVILVGIKAMLPNFRGMEGRVIVYDGACLDPERGHICSYLFRFESDCCYFGLRPEHCLSTTDVNLAKRFRFRVDFDCPQYEQDTELFALDIGVAYRCVNSARFLETKTGDSGWASQAISGCEALKYNEEIKMAILDHKSPLFLEEGAPNVHIEKRMFRGDKIRRSRSISAKRGPNSRSKETRGFRSLSARIERFGKDEFGRRASTSEAPPGRSVSVEDTDRPGKGNSDGSSP</sequence>
<dbReference type="EC" id="3.4.21.-"/>
<dbReference type="EMBL" id="AY596172">
    <property type="status" value="NOT_ANNOTATED_CDS"/>
    <property type="molecule type" value="Genomic_RNA"/>
</dbReference>
<dbReference type="GO" id="GO:0003723">
    <property type="term" value="F:RNA binding"/>
    <property type="evidence" value="ECO:0007669"/>
    <property type="project" value="UniProtKB-KW"/>
</dbReference>
<dbReference type="GO" id="GO:0004252">
    <property type="term" value="F:serine-type endopeptidase activity"/>
    <property type="evidence" value="ECO:0007669"/>
    <property type="project" value="InterPro"/>
</dbReference>
<dbReference type="GO" id="GO:0006508">
    <property type="term" value="P:proteolysis"/>
    <property type="evidence" value="ECO:0007669"/>
    <property type="project" value="InterPro"/>
</dbReference>
<dbReference type="GO" id="GO:0046740">
    <property type="term" value="P:transport of virus in host, cell to cell"/>
    <property type="evidence" value="ECO:0007669"/>
    <property type="project" value="UniProtKB-KW"/>
</dbReference>
<dbReference type="InterPro" id="IPR001815">
    <property type="entry name" value="Trichovirus_mp"/>
</dbReference>
<dbReference type="InterPro" id="IPR028919">
    <property type="entry name" value="Viral_movement"/>
</dbReference>
<dbReference type="Pfam" id="PF01107">
    <property type="entry name" value="MP"/>
    <property type="match status" value="1"/>
</dbReference>
<dbReference type="PRINTS" id="PR00995">
    <property type="entry name" value="CAPILLOPTASE"/>
</dbReference>
<comment type="function">
    <text evidence="1">May play a role in viral cell to cell movement by increasing the size exclusion limit of plasmodesmata and forming a complex with viral RNA to assist its movement (By similarity). May also have a papain-like protease activity and cleave the genome polyprotein.</text>
</comment>
<comment type="similarity">
    <text evidence="4">Belongs to the tobamoviruses movement protein family.</text>
</comment>
<name>MP_ASGVK</name>
<organismHost>
    <name type="scientific">Malus sylvestris</name>
    <name type="common">European crab apple</name>
    <dbReference type="NCBI Taxonomy" id="3752"/>
</organismHost>
<protein>
    <recommendedName>
        <fullName>Putative movement protein</fullName>
        <ecNumber>3.4.21.-</ecNumber>
    </recommendedName>
    <alternativeName>
        <fullName>36 kDa protein</fullName>
    </alternativeName>
    <alternativeName>
        <fullName>ORF2 protein</fullName>
    </alternativeName>
</protein>
<keyword id="KW-0378">Hydrolase</keyword>
<keyword id="KW-0694">RNA-binding</keyword>
<keyword id="KW-0813">Transport</keyword>
<keyword id="KW-0916">Viral movement protein</keyword>
<organism>
    <name type="scientific">Apple stem grooving virus (strain Korea)</name>
    <name type="common">ASGV</name>
    <dbReference type="NCBI Taxonomy" id="273525"/>
    <lineage>
        <taxon>Viruses</taxon>
        <taxon>Riboviria</taxon>
        <taxon>Orthornavirae</taxon>
        <taxon>Kitrinoviricota</taxon>
        <taxon>Alsuviricetes</taxon>
        <taxon>Tymovirales</taxon>
        <taxon>Betaflexiviridae</taxon>
        <taxon>Trivirinae</taxon>
        <taxon>Capillovirus</taxon>
        <taxon>Capillovirus mali</taxon>
    </lineage>
</organism>
<feature type="chain" id="PRO_0000249222" description="Putative movement protein">
    <location>
        <begin position="1"/>
        <end position="320"/>
    </location>
</feature>
<feature type="region of interest" description="Disordered" evidence="3">
    <location>
        <begin position="251"/>
        <end position="320"/>
    </location>
</feature>
<feature type="compositionally biased region" description="Basic and acidic residues" evidence="3">
    <location>
        <begin position="278"/>
        <end position="289"/>
    </location>
</feature>
<feature type="active site" evidence="2">
    <location>
        <position position="144"/>
    </location>
</feature>
<feature type="active site" evidence="2">
    <location>
        <position position="171"/>
    </location>
</feature>
<feature type="active site" evidence="2">
    <location>
        <position position="199"/>
    </location>
</feature>